<sequence>MSSSEEDDGYVPFSKRPEWSDVKPLAQDDGPHPICPILYSEVFKDKMNYFRAILKSKEKSLRVLDLLEEVIQENPSNYTIWYYRREVLKAIEQDETIEYDIQQEMNLLNDMGETDPKNYQIWNHRRFIVEKYIGSDNKEKEFLSGVLLEDAKNYHAWSHRQWLLKTYRDWNGELAMVDKLLSLDHRNNSVWNHRFFVISNLNPSPFPLSLIEREVEFAFNHIRHSPNNESPWSYLKGLFKGQKISTIYPSLLDILLEMKSKYIGCSHVNSIILDIYQEQNTKISLENSLNICKLLSETIDPIHKNYWNFKYNTISDQLKLIN</sequence>
<name>FNTA_DICDI</name>
<proteinExistence type="inferred from homology"/>
<evidence type="ECO:0000250" key="1"/>
<evidence type="ECO:0000250" key="2">
    <source>
        <dbReference type="UniProtKB" id="P29703"/>
    </source>
</evidence>
<evidence type="ECO:0000256" key="3">
    <source>
        <dbReference type="SAM" id="MobiDB-lite"/>
    </source>
</evidence>
<evidence type="ECO:0000305" key="4"/>
<gene>
    <name type="primary">fntA</name>
    <name type="ORF">DDB_G0283053</name>
</gene>
<dbReference type="EC" id="2.5.1.58"/>
<dbReference type="EC" id="2.5.1.59"/>
<dbReference type="EMBL" id="AAFI02000049">
    <property type="protein sequence ID" value="EAL65970.1"/>
    <property type="molecule type" value="Genomic_DNA"/>
</dbReference>
<dbReference type="RefSeq" id="XP_639262.1">
    <property type="nucleotide sequence ID" value="XM_634170.1"/>
</dbReference>
<dbReference type="SMR" id="Q54RT9"/>
<dbReference type="FunCoup" id="Q54RT9">
    <property type="interactions" value="853"/>
</dbReference>
<dbReference type="STRING" id="44689.Q54RT9"/>
<dbReference type="PaxDb" id="44689-DDB0237551"/>
<dbReference type="EnsemblProtists" id="EAL65970">
    <property type="protein sequence ID" value="EAL65970"/>
    <property type="gene ID" value="DDB_G0283053"/>
</dbReference>
<dbReference type="GeneID" id="8623832"/>
<dbReference type="KEGG" id="ddi:DDB_G0283053"/>
<dbReference type="dictyBase" id="DDB_G0283053">
    <property type="gene designation" value="fntA"/>
</dbReference>
<dbReference type="VEuPathDB" id="AmoebaDB:DDB_G0283053"/>
<dbReference type="eggNOG" id="KOG0530">
    <property type="taxonomic scope" value="Eukaryota"/>
</dbReference>
<dbReference type="HOGENOM" id="CLU_026582_1_1_1"/>
<dbReference type="InParanoid" id="Q54RT9"/>
<dbReference type="OMA" id="WAIRTFN"/>
<dbReference type="PhylomeDB" id="Q54RT9"/>
<dbReference type="Reactome" id="R-DDI-9648002">
    <property type="pathway name" value="RAS processing"/>
</dbReference>
<dbReference type="PRO" id="PR:Q54RT9"/>
<dbReference type="Proteomes" id="UP000002195">
    <property type="component" value="Chromosome 4"/>
</dbReference>
<dbReference type="GO" id="GO:0005953">
    <property type="term" value="C:CAAX-protein geranylgeranyltransferase complex"/>
    <property type="evidence" value="ECO:0000250"/>
    <property type="project" value="UniProtKB"/>
</dbReference>
<dbReference type="GO" id="GO:0005737">
    <property type="term" value="C:cytoplasm"/>
    <property type="evidence" value="ECO:0000318"/>
    <property type="project" value="GO_Central"/>
</dbReference>
<dbReference type="GO" id="GO:0005965">
    <property type="term" value="C:protein farnesyltransferase complex"/>
    <property type="evidence" value="ECO:0000250"/>
    <property type="project" value="UniProtKB"/>
</dbReference>
<dbReference type="GO" id="GO:0004662">
    <property type="term" value="F:CAAX-protein geranylgeranyltransferase activity"/>
    <property type="evidence" value="ECO:0007669"/>
    <property type="project" value="UniProtKB-EC"/>
</dbReference>
<dbReference type="GO" id="GO:0004660">
    <property type="term" value="F:protein farnesyltransferase activity"/>
    <property type="evidence" value="ECO:0000250"/>
    <property type="project" value="UniProtKB"/>
</dbReference>
<dbReference type="GO" id="GO:0004661">
    <property type="term" value="F:protein geranylgeranyltransferase activity"/>
    <property type="evidence" value="ECO:0000250"/>
    <property type="project" value="UniProtKB"/>
</dbReference>
<dbReference type="GO" id="GO:0007323">
    <property type="term" value="P:peptide pheromone maturation"/>
    <property type="evidence" value="ECO:0000318"/>
    <property type="project" value="GO_Central"/>
</dbReference>
<dbReference type="GO" id="GO:0018343">
    <property type="term" value="P:protein farnesylation"/>
    <property type="evidence" value="ECO:0000250"/>
    <property type="project" value="UniProtKB"/>
</dbReference>
<dbReference type="GO" id="GO:0018344">
    <property type="term" value="P:protein geranylgeranylation"/>
    <property type="evidence" value="ECO:0000250"/>
    <property type="project" value="UniProtKB"/>
</dbReference>
<dbReference type="Gene3D" id="1.25.40.120">
    <property type="entry name" value="Protein prenylyltransferase"/>
    <property type="match status" value="1"/>
</dbReference>
<dbReference type="InterPro" id="IPR002088">
    <property type="entry name" value="Prenyl_trans_a"/>
</dbReference>
<dbReference type="PANTHER" id="PTHR11129">
    <property type="entry name" value="PROTEIN FARNESYLTRANSFERASE ALPHA SUBUNIT/RAB GERANYLGERANYL TRANSFERASE ALPHA SUBUNIT"/>
    <property type="match status" value="1"/>
</dbReference>
<dbReference type="PANTHER" id="PTHR11129:SF1">
    <property type="entry name" value="PROTEIN FARNESYLTRANSFERASE_GERANYLGERANYLTRANSFERASE TYPE-1 SUBUNIT ALPHA"/>
    <property type="match status" value="1"/>
</dbReference>
<dbReference type="Pfam" id="PF01239">
    <property type="entry name" value="PPTA"/>
    <property type="match status" value="5"/>
</dbReference>
<dbReference type="SUPFAM" id="SSF48439">
    <property type="entry name" value="Protein prenylyltransferase"/>
    <property type="match status" value="1"/>
</dbReference>
<dbReference type="PROSITE" id="PS51147">
    <property type="entry name" value="PFTA"/>
    <property type="match status" value="5"/>
</dbReference>
<keyword id="KW-0460">Magnesium</keyword>
<keyword id="KW-0637">Prenyltransferase</keyword>
<keyword id="KW-1185">Reference proteome</keyword>
<keyword id="KW-0677">Repeat</keyword>
<keyword id="KW-0808">Transferase</keyword>
<protein>
    <recommendedName>
        <fullName>Protein farnesyltransferase/geranylgeranyltransferase type-1 subunit alpha</fullName>
        <ecNumber>2.5.1.58</ecNumber>
        <ecNumber>2.5.1.59</ecNumber>
    </recommendedName>
    <alternativeName>
        <fullName>CAAX farnesyltransferase subunit alpha</fullName>
    </alternativeName>
    <alternativeName>
        <fullName>FTase-alpha</fullName>
    </alternativeName>
    <alternativeName>
        <fullName>Ras proteins prenyltransferase subunit alpha</fullName>
    </alternativeName>
    <alternativeName>
        <fullName>Type I protein geranyl-geranyltransferase subunit alpha</fullName>
        <shortName>GGTase-I-alpha</shortName>
    </alternativeName>
</protein>
<organism>
    <name type="scientific">Dictyostelium discoideum</name>
    <name type="common">Social amoeba</name>
    <dbReference type="NCBI Taxonomy" id="44689"/>
    <lineage>
        <taxon>Eukaryota</taxon>
        <taxon>Amoebozoa</taxon>
        <taxon>Evosea</taxon>
        <taxon>Eumycetozoa</taxon>
        <taxon>Dictyostelia</taxon>
        <taxon>Dictyosteliales</taxon>
        <taxon>Dictyosteliaceae</taxon>
        <taxon>Dictyostelium</taxon>
    </lineage>
</organism>
<reference key="1">
    <citation type="journal article" date="2005" name="Nature">
        <title>The genome of the social amoeba Dictyostelium discoideum.</title>
        <authorList>
            <person name="Eichinger L."/>
            <person name="Pachebat J.A."/>
            <person name="Gloeckner G."/>
            <person name="Rajandream M.A."/>
            <person name="Sucgang R."/>
            <person name="Berriman M."/>
            <person name="Song J."/>
            <person name="Olsen R."/>
            <person name="Szafranski K."/>
            <person name="Xu Q."/>
            <person name="Tunggal B."/>
            <person name="Kummerfeld S."/>
            <person name="Madera M."/>
            <person name="Konfortov B.A."/>
            <person name="Rivero F."/>
            <person name="Bankier A.T."/>
            <person name="Lehmann R."/>
            <person name="Hamlin N."/>
            <person name="Davies R."/>
            <person name="Gaudet P."/>
            <person name="Fey P."/>
            <person name="Pilcher K."/>
            <person name="Chen G."/>
            <person name="Saunders D."/>
            <person name="Sodergren E.J."/>
            <person name="Davis P."/>
            <person name="Kerhornou A."/>
            <person name="Nie X."/>
            <person name="Hall N."/>
            <person name="Anjard C."/>
            <person name="Hemphill L."/>
            <person name="Bason N."/>
            <person name="Farbrother P."/>
            <person name="Desany B."/>
            <person name="Just E."/>
            <person name="Morio T."/>
            <person name="Rost R."/>
            <person name="Churcher C.M."/>
            <person name="Cooper J."/>
            <person name="Haydock S."/>
            <person name="van Driessche N."/>
            <person name="Cronin A."/>
            <person name="Goodhead I."/>
            <person name="Muzny D.M."/>
            <person name="Mourier T."/>
            <person name="Pain A."/>
            <person name="Lu M."/>
            <person name="Harper D."/>
            <person name="Lindsay R."/>
            <person name="Hauser H."/>
            <person name="James K.D."/>
            <person name="Quiles M."/>
            <person name="Madan Babu M."/>
            <person name="Saito T."/>
            <person name="Buchrieser C."/>
            <person name="Wardroper A."/>
            <person name="Felder M."/>
            <person name="Thangavelu M."/>
            <person name="Johnson D."/>
            <person name="Knights A."/>
            <person name="Loulseged H."/>
            <person name="Mungall K.L."/>
            <person name="Oliver K."/>
            <person name="Price C."/>
            <person name="Quail M.A."/>
            <person name="Urushihara H."/>
            <person name="Hernandez J."/>
            <person name="Rabbinowitsch E."/>
            <person name="Steffen D."/>
            <person name="Sanders M."/>
            <person name="Ma J."/>
            <person name="Kohara Y."/>
            <person name="Sharp S."/>
            <person name="Simmonds M.N."/>
            <person name="Spiegler S."/>
            <person name="Tivey A."/>
            <person name="Sugano S."/>
            <person name="White B."/>
            <person name="Walker D."/>
            <person name="Woodward J.R."/>
            <person name="Winckler T."/>
            <person name="Tanaka Y."/>
            <person name="Shaulsky G."/>
            <person name="Schleicher M."/>
            <person name="Weinstock G.M."/>
            <person name="Rosenthal A."/>
            <person name="Cox E.C."/>
            <person name="Chisholm R.L."/>
            <person name="Gibbs R.A."/>
            <person name="Loomis W.F."/>
            <person name="Platzer M."/>
            <person name="Kay R.R."/>
            <person name="Williams J.G."/>
            <person name="Dear P.H."/>
            <person name="Noegel A.A."/>
            <person name="Barrell B.G."/>
            <person name="Kuspa A."/>
        </authorList>
    </citation>
    <scope>NUCLEOTIDE SEQUENCE [LARGE SCALE GENOMIC DNA]</scope>
    <source>
        <strain>AX4</strain>
    </source>
</reference>
<comment type="function">
    <text evidence="1">Catalyzes the transfer of a farnesyl or geranyl-geranyl moiety from farnesyl or geranyl-geranyl diphosphate to a cysteine at the fourth position from the C-terminus of several proteins having the C-terminal sequence Cys-aliphatic-aliphatic-X. The alpha subunit is thought to participate in a stable complex with the substrate. The beta subunit binds the peptide substrate (By similarity).</text>
</comment>
<comment type="catalytic activity">
    <reaction>
        <text>L-cysteinyl-[protein] + (2E,6E)-farnesyl diphosphate = S-(2E,6E)-farnesyl-L-cysteinyl-[protein] + diphosphate</text>
        <dbReference type="Rhea" id="RHEA:13345"/>
        <dbReference type="Rhea" id="RHEA-COMP:10131"/>
        <dbReference type="Rhea" id="RHEA-COMP:11535"/>
        <dbReference type="ChEBI" id="CHEBI:29950"/>
        <dbReference type="ChEBI" id="CHEBI:33019"/>
        <dbReference type="ChEBI" id="CHEBI:86019"/>
        <dbReference type="ChEBI" id="CHEBI:175763"/>
        <dbReference type="EC" id="2.5.1.58"/>
    </reaction>
</comment>
<comment type="catalytic activity">
    <reaction>
        <text>geranylgeranyl diphosphate + L-cysteinyl-[protein] = S-geranylgeranyl-L-cysteinyl-[protein] + diphosphate</text>
        <dbReference type="Rhea" id="RHEA:21240"/>
        <dbReference type="Rhea" id="RHEA-COMP:10131"/>
        <dbReference type="Rhea" id="RHEA-COMP:11537"/>
        <dbReference type="ChEBI" id="CHEBI:29950"/>
        <dbReference type="ChEBI" id="CHEBI:33019"/>
        <dbReference type="ChEBI" id="CHEBI:57533"/>
        <dbReference type="ChEBI" id="CHEBI:86021"/>
        <dbReference type="EC" id="2.5.1.59"/>
    </reaction>
</comment>
<comment type="cofactor">
    <cofactor evidence="2">
        <name>Mg(2+)</name>
        <dbReference type="ChEBI" id="CHEBI:18420"/>
    </cofactor>
</comment>
<comment type="subunit">
    <text evidence="1">Heterodimer of fntA and fntB (farnesyltransferase). Heterodimer of an alpha and a beta subunit (By similarity).</text>
</comment>
<comment type="similarity">
    <text evidence="4">Belongs to the protein prenyltransferase subunit alpha family.</text>
</comment>
<accession>Q54RT9</accession>
<feature type="chain" id="PRO_0000328341" description="Protein farnesyltransferase/geranylgeranyltransferase type-1 subunit alpha">
    <location>
        <begin position="1"/>
        <end position="322"/>
    </location>
</feature>
<feature type="repeat" description="PFTA 1">
    <location>
        <begin position="62"/>
        <end position="95"/>
    </location>
</feature>
<feature type="repeat" description="PFTA 2">
    <location>
        <begin position="103"/>
        <end position="136"/>
    </location>
</feature>
<feature type="repeat" description="PFTA 3">
    <location>
        <begin position="138"/>
        <end position="171"/>
    </location>
</feature>
<feature type="repeat" description="PFTA 4">
    <location>
        <begin position="173"/>
        <end position="205"/>
    </location>
</feature>
<feature type="repeat" description="PFTA 5">
    <location>
        <begin position="213"/>
        <end position="246"/>
    </location>
</feature>
<feature type="repeat" description="PFTA 6">
    <location>
        <begin position="287"/>
        <end position="321"/>
    </location>
</feature>
<feature type="region of interest" description="Disordered" evidence="3">
    <location>
        <begin position="1"/>
        <end position="27"/>
    </location>
</feature>